<feature type="chain" id="PRO_0000267751" description="3-hydroxydecanoyl-[acyl-carrier-protein] dehydratase">
    <location>
        <begin position="1"/>
        <end position="171"/>
    </location>
</feature>
<feature type="active site" evidence="1">
    <location>
        <position position="70"/>
    </location>
</feature>
<proteinExistence type="inferred from homology"/>
<accession>Q07ZR8</accession>
<reference key="1">
    <citation type="submission" date="2006-08" db="EMBL/GenBank/DDBJ databases">
        <title>Complete sequence of Shewanella frigidimarina NCIMB 400.</title>
        <authorList>
            <consortium name="US DOE Joint Genome Institute"/>
            <person name="Copeland A."/>
            <person name="Lucas S."/>
            <person name="Lapidus A."/>
            <person name="Barry K."/>
            <person name="Detter J.C."/>
            <person name="Glavina del Rio T."/>
            <person name="Hammon N."/>
            <person name="Israni S."/>
            <person name="Dalin E."/>
            <person name="Tice H."/>
            <person name="Pitluck S."/>
            <person name="Fredrickson J.K."/>
            <person name="Kolker E."/>
            <person name="McCuel L.A."/>
            <person name="DiChristina T."/>
            <person name="Nealson K.H."/>
            <person name="Newman D."/>
            <person name="Tiedje J.M."/>
            <person name="Zhou J."/>
            <person name="Romine M.F."/>
            <person name="Culley D.E."/>
            <person name="Serres M."/>
            <person name="Chertkov O."/>
            <person name="Brettin T."/>
            <person name="Bruce D."/>
            <person name="Han C."/>
            <person name="Tapia R."/>
            <person name="Gilna P."/>
            <person name="Schmutz J."/>
            <person name="Larimer F."/>
            <person name="Land M."/>
            <person name="Hauser L."/>
            <person name="Kyrpides N."/>
            <person name="Mikhailova N."/>
            <person name="Richardson P."/>
        </authorList>
    </citation>
    <scope>NUCLEOTIDE SEQUENCE [LARGE SCALE GENOMIC DNA]</scope>
    <source>
        <strain>NCIMB 400</strain>
    </source>
</reference>
<name>FABA_SHEFN</name>
<keyword id="KW-0963">Cytoplasm</keyword>
<keyword id="KW-0275">Fatty acid biosynthesis</keyword>
<keyword id="KW-0276">Fatty acid metabolism</keyword>
<keyword id="KW-0413">Isomerase</keyword>
<keyword id="KW-0444">Lipid biosynthesis</keyword>
<keyword id="KW-0443">Lipid metabolism</keyword>
<keyword id="KW-0456">Lyase</keyword>
<keyword id="KW-1185">Reference proteome</keyword>
<evidence type="ECO:0000255" key="1">
    <source>
        <dbReference type="HAMAP-Rule" id="MF_00405"/>
    </source>
</evidence>
<comment type="function">
    <text evidence="1">Necessary for the introduction of cis unsaturation into fatty acids. Catalyzes the dehydration of (3R)-3-hydroxydecanoyl-ACP to E-(2)-decenoyl-ACP and then its isomerization to Z-(3)-decenoyl-ACP. Can catalyze the dehydratase reaction for beta-hydroxyacyl-ACPs with saturated chain lengths up to 16:0, being most active on intermediate chain length.</text>
</comment>
<comment type="catalytic activity">
    <reaction evidence="1">
        <text>a (3R)-hydroxyacyl-[ACP] = a (2E)-enoyl-[ACP] + H2O</text>
        <dbReference type="Rhea" id="RHEA:13097"/>
        <dbReference type="Rhea" id="RHEA-COMP:9925"/>
        <dbReference type="Rhea" id="RHEA-COMP:9945"/>
        <dbReference type="ChEBI" id="CHEBI:15377"/>
        <dbReference type="ChEBI" id="CHEBI:78784"/>
        <dbReference type="ChEBI" id="CHEBI:78827"/>
        <dbReference type="EC" id="4.2.1.59"/>
    </reaction>
</comment>
<comment type="catalytic activity">
    <reaction evidence="1">
        <text>(3R)-hydroxydecanoyl-[ACP] = (2E)-decenoyl-[ACP] + H2O</text>
        <dbReference type="Rhea" id="RHEA:41860"/>
        <dbReference type="Rhea" id="RHEA-COMP:9638"/>
        <dbReference type="Rhea" id="RHEA-COMP:9639"/>
        <dbReference type="ChEBI" id="CHEBI:15377"/>
        <dbReference type="ChEBI" id="CHEBI:78466"/>
        <dbReference type="ChEBI" id="CHEBI:78467"/>
    </reaction>
</comment>
<comment type="catalytic activity">
    <reaction evidence="1">
        <text>(2E)-decenoyl-[ACP] = (3Z)-decenoyl-[ACP]</text>
        <dbReference type="Rhea" id="RHEA:23568"/>
        <dbReference type="Rhea" id="RHEA-COMP:9639"/>
        <dbReference type="Rhea" id="RHEA-COMP:9927"/>
        <dbReference type="ChEBI" id="CHEBI:78467"/>
        <dbReference type="ChEBI" id="CHEBI:78798"/>
        <dbReference type="EC" id="5.3.3.14"/>
    </reaction>
</comment>
<comment type="pathway">
    <text evidence="1">Lipid metabolism; fatty acid biosynthesis.</text>
</comment>
<comment type="subunit">
    <text evidence="1">Homodimer.</text>
</comment>
<comment type="subcellular location">
    <subcellularLocation>
        <location evidence="1">Cytoplasm</location>
    </subcellularLocation>
</comment>
<comment type="similarity">
    <text evidence="1">Belongs to the thioester dehydratase family. FabA subfamily.</text>
</comment>
<dbReference type="EC" id="4.2.1.59" evidence="1"/>
<dbReference type="EC" id="5.3.3.14" evidence="1"/>
<dbReference type="EMBL" id="CP000447">
    <property type="protein sequence ID" value="ABI72497.1"/>
    <property type="molecule type" value="Genomic_DNA"/>
</dbReference>
<dbReference type="RefSeq" id="WP_011638105.1">
    <property type="nucleotide sequence ID" value="NC_008345.1"/>
</dbReference>
<dbReference type="SMR" id="Q07ZR8"/>
<dbReference type="STRING" id="318167.Sfri_2656"/>
<dbReference type="KEGG" id="sfr:Sfri_2656"/>
<dbReference type="eggNOG" id="COG0764">
    <property type="taxonomic scope" value="Bacteria"/>
</dbReference>
<dbReference type="HOGENOM" id="CLU_097925_0_0_6"/>
<dbReference type="OrthoDB" id="9786735at2"/>
<dbReference type="UniPathway" id="UPA00094"/>
<dbReference type="Proteomes" id="UP000000684">
    <property type="component" value="Chromosome"/>
</dbReference>
<dbReference type="GO" id="GO:0005737">
    <property type="term" value="C:cytoplasm"/>
    <property type="evidence" value="ECO:0007669"/>
    <property type="project" value="UniProtKB-SubCell"/>
</dbReference>
<dbReference type="GO" id="GO:0019171">
    <property type="term" value="F:(3R)-hydroxyacyl-[acyl-carrier-protein] dehydratase activity"/>
    <property type="evidence" value="ECO:0007669"/>
    <property type="project" value="UniProtKB-UniRule"/>
</dbReference>
<dbReference type="GO" id="GO:0034017">
    <property type="term" value="F:trans-2-decenoyl-acyl-carrier-protein isomerase activity"/>
    <property type="evidence" value="ECO:0007669"/>
    <property type="project" value="UniProtKB-UniRule"/>
</dbReference>
<dbReference type="GO" id="GO:0006636">
    <property type="term" value="P:unsaturated fatty acid biosynthetic process"/>
    <property type="evidence" value="ECO:0007669"/>
    <property type="project" value="UniProtKB-UniRule"/>
</dbReference>
<dbReference type="CDD" id="cd01287">
    <property type="entry name" value="FabA"/>
    <property type="match status" value="1"/>
</dbReference>
<dbReference type="Gene3D" id="3.10.129.10">
    <property type="entry name" value="Hotdog Thioesterase"/>
    <property type="match status" value="1"/>
</dbReference>
<dbReference type="HAMAP" id="MF_00405">
    <property type="entry name" value="FabA"/>
    <property type="match status" value="1"/>
</dbReference>
<dbReference type="InterPro" id="IPR010083">
    <property type="entry name" value="FabA"/>
</dbReference>
<dbReference type="InterPro" id="IPR013114">
    <property type="entry name" value="FabA_FabZ"/>
</dbReference>
<dbReference type="InterPro" id="IPR029069">
    <property type="entry name" value="HotDog_dom_sf"/>
</dbReference>
<dbReference type="NCBIfam" id="TIGR01749">
    <property type="entry name" value="fabA"/>
    <property type="match status" value="1"/>
</dbReference>
<dbReference type="NCBIfam" id="NF003509">
    <property type="entry name" value="PRK05174.1"/>
    <property type="match status" value="1"/>
</dbReference>
<dbReference type="PANTHER" id="PTHR30272">
    <property type="entry name" value="3-HYDROXYACYL-[ACYL-CARRIER-PROTEIN] DEHYDRATASE"/>
    <property type="match status" value="1"/>
</dbReference>
<dbReference type="PANTHER" id="PTHR30272:SF8">
    <property type="entry name" value="3-HYDROXYDECANOYL-[ACYL-CARRIER-PROTEIN] DEHYDRATASE"/>
    <property type="match status" value="1"/>
</dbReference>
<dbReference type="Pfam" id="PF07977">
    <property type="entry name" value="FabA"/>
    <property type="match status" value="1"/>
</dbReference>
<dbReference type="SUPFAM" id="SSF54637">
    <property type="entry name" value="Thioesterase/thiol ester dehydrase-isomerase"/>
    <property type="match status" value="1"/>
</dbReference>
<sequence>MEKANSFTKEQLVACGHGNLLGPNRPRLPVDNMLMIDRIITINEDGGAFGKGEIIAELDITPDLWFFDCHFISDPVMPGCLGLDAMWQLVGFFLGWEGAEGKGRALGVGEVKFTGQVLPDAKKVTYKLNIKRKIHRKLVMGIADATMEVDGRQIYSATDLKVGIFSDTSTF</sequence>
<organism>
    <name type="scientific">Shewanella frigidimarina (strain NCIMB 400)</name>
    <dbReference type="NCBI Taxonomy" id="318167"/>
    <lineage>
        <taxon>Bacteria</taxon>
        <taxon>Pseudomonadati</taxon>
        <taxon>Pseudomonadota</taxon>
        <taxon>Gammaproteobacteria</taxon>
        <taxon>Alteromonadales</taxon>
        <taxon>Shewanellaceae</taxon>
        <taxon>Shewanella</taxon>
    </lineage>
</organism>
<protein>
    <recommendedName>
        <fullName evidence="1">3-hydroxydecanoyl-[acyl-carrier-protein] dehydratase</fullName>
        <ecNumber evidence="1">4.2.1.59</ecNumber>
    </recommendedName>
    <alternativeName>
        <fullName evidence="1">3-hydroxyacyl-[acyl-carrier-protein] dehydratase FabA</fullName>
    </alternativeName>
    <alternativeName>
        <fullName evidence="1">Beta-hydroxydecanoyl thioester dehydrase</fullName>
    </alternativeName>
    <alternativeName>
        <fullName evidence="1">Trans-2-decenoyl-[acyl-carrier-protein] isomerase</fullName>
        <ecNumber evidence="1">5.3.3.14</ecNumber>
    </alternativeName>
</protein>
<gene>
    <name evidence="1" type="primary">fabA</name>
    <name type="ordered locus">Sfri_2656</name>
</gene>